<feature type="signal peptide" evidence="2">
    <location>
        <begin position="1"/>
        <end position="21"/>
    </location>
</feature>
<feature type="chain" id="PRO_0000021606" description="Leucine-rich repeat-containing protein 15">
    <location>
        <begin position="22"/>
        <end position="579"/>
    </location>
</feature>
<feature type="topological domain" description="Extracellular" evidence="2">
    <location>
        <begin position="22"/>
        <end position="536"/>
    </location>
</feature>
<feature type="transmembrane region" description="Helical" evidence="2">
    <location>
        <begin position="537"/>
        <end position="557"/>
    </location>
</feature>
<feature type="topological domain" description="Cytoplasmic" evidence="2">
    <location>
        <begin position="558"/>
        <end position="579"/>
    </location>
</feature>
<feature type="domain" description="LRRNT">
    <location>
        <begin position="22"/>
        <end position="53"/>
    </location>
</feature>
<feature type="repeat" description="LRR 1">
    <location>
        <begin position="54"/>
        <end position="75"/>
    </location>
</feature>
<feature type="repeat" description="LRR 2">
    <location>
        <begin position="78"/>
        <end position="99"/>
    </location>
</feature>
<feature type="repeat" description="LRR 3">
    <location>
        <begin position="102"/>
        <end position="123"/>
    </location>
</feature>
<feature type="repeat" description="LRR 4">
    <location>
        <begin position="126"/>
        <end position="147"/>
    </location>
</feature>
<feature type="repeat" description="LRR 5">
    <location>
        <begin position="150"/>
        <end position="171"/>
    </location>
</feature>
<feature type="repeat" description="LRR 6">
    <location>
        <begin position="174"/>
        <end position="195"/>
    </location>
</feature>
<feature type="repeat" description="LRR 7">
    <location>
        <begin position="198"/>
        <end position="219"/>
    </location>
</feature>
<feature type="repeat" description="LRR 8">
    <location>
        <begin position="222"/>
        <end position="243"/>
    </location>
</feature>
<feature type="repeat" description="LRR 9">
    <location>
        <begin position="246"/>
        <end position="267"/>
    </location>
</feature>
<feature type="repeat" description="LRR 10">
    <location>
        <begin position="270"/>
        <end position="291"/>
    </location>
</feature>
<feature type="repeat" description="LRR 11">
    <location>
        <begin position="294"/>
        <end position="315"/>
    </location>
</feature>
<feature type="repeat" description="LRR 12">
    <location>
        <begin position="318"/>
        <end position="339"/>
    </location>
</feature>
<feature type="repeat" description="LRR 13">
    <location>
        <begin position="342"/>
        <end position="363"/>
    </location>
</feature>
<feature type="repeat" description="LRR 14">
    <location>
        <begin position="366"/>
        <end position="387"/>
    </location>
</feature>
<feature type="repeat" description="LRR 15">
    <location>
        <begin position="390"/>
        <end position="411"/>
    </location>
</feature>
<feature type="domain" description="LRRCT">
    <location>
        <begin position="423"/>
        <end position="473"/>
    </location>
</feature>
<feature type="region of interest" description="Disordered" evidence="3">
    <location>
        <begin position="476"/>
        <end position="509"/>
    </location>
</feature>
<feature type="compositionally biased region" description="Low complexity" evidence="3">
    <location>
        <begin position="485"/>
        <end position="506"/>
    </location>
</feature>
<feature type="glycosylation site" description="N-linked (GlcNAc...) asparagine" evidence="2">
    <location>
        <position position="75"/>
    </location>
</feature>
<feature type="glycosylation site" description="N-linked (GlcNAc...) asparagine" evidence="2">
    <location>
        <position position="369"/>
    </location>
</feature>
<protein>
    <recommendedName>
        <fullName>Leucine-rich repeat-containing protein 15</fullName>
    </recommendedName>
</protein>
<proteinExistence type="evidence at protein level"/>
<reference key="1">
    <citation type="journal article" date="2004" name="Genome Res.">
        <title>The status, quality, and expansion of the NIH full-length cDNA project: the Mammalian Gene Collection (MGC).</title>
        <authorList>
            <consortium name="The MGC Project Team"/>
        </authorList>
    </citation>
    <scope>NUCLEOTIDE SEQUENCE [LARGE SCALE MRNA]</scope>
    <source>
        <tissue>Olfactory epithelium</tissue>
    </source>
</reference>
<reference key="2">
    <citation type="journal article" date="2021" name="Sci. Rep.">
        <title>Transcriptomic and epigenomic analyses uncovered Lrrc15 as a contributing factor to cartilage damage in osteoarthritis.</title>
        <authorList>
            <person name="Singh P."/>
            <person name="Wang M."/>
            <person name="Mukherjee P."/>
            <person name="Lessard S.G."/>
            <person name="Pannellini T."/>
            <person name="Carballo C.B."/>
            <person name="Rodeo S.A."/>
            <person name="Goldring M.B."/>
            <person name="Otero M."/>
        </authorList>
    </citation>
    <scope>TISSUE SPECIFICITY</scope>
    <scope>INDUCTION BY IL1B</scope>
</reference>
<evidence type="ECO:0000250" key="1">
    <source>
        <dbReference type="UniProtKB" id="Q8TF66"/>
    </source>
</evidence>
<evidence type="ECO:0000255" key="2"/>
<evidence type="ECO:0000256" key="3">
    <source>
        <dbReference type="SAM" id="MobiDB-lite"/>
    </source>
</evidence>
<evidence type="ECO:0000269" key="4">
    <source>
    </source>
</evidence>
<comment type="subcellular location">
    <subcellularLocation>
        <location evidence="1">Cell membrane</location>
        <topology evidence="2">Single-pass type I membrane protein</topology>
    </subcellularLocation>
</comment>
<comment type="tissue specificity">
    <text evidence="4">Expressed in chodrocytes (at protein level).</text>
</comment>
<comment type="induction">
    <text evidence="4">In chodrocytes, expression is induced by IL1B.</text>
</comment>
<dbReference type="EMBL" id="BC050245">
    <property type="protein sequence ID" value="AAH50245.1"/>
    <property type="molecule type" value="mRNA"/>
</dbReference>
<dbReference type="CCDS" id="CCDS28099.1"/>
<dbReference type="RefSeq" id="NP_083249.1">
    <property type="nucleotide sequence ID" value="NM_028973.2"/>
</dbReference>
<dbReference type="RefSeq" id="XP_036016065.1">
    <property type="nucleotide sequence ID" value="XM_036160172.1"/>
</dbReference>
<dbReference type="SMR" id="Q80X72"/>
<dbReference type="BioGRID" id="216793">
    <property type="interactions" value="1"/>
</dbReference>
<dbReference type="FunCoup" id="Q80X72">
    <property type="interactions" value="122"/>
</dbReference>
<dbReference type="IntAct" id="Q80X72">
    <property type="interactions" value="1"/>
</dbReference>
<dbReference type="STRING" id="10090.ENSMUSP00000066777"/>
<dbReference type="GlyCosmos" id="Q80X72">
    <property type="glycosylation" value="2 sites, No reported glycans"/>
</dbReference>
<dbReference type="GlyGen" id="Q80X72">
    <property type="glycosylation" value="2 sites, 2 N-linked glycans (2 sites)"/>
</dbReference>
<dbReference type="PhosphoSitePlus" id="Q80X72"/>
<dbReference type="PaxDb" id="10090-ENSMUSP00000066777"/>
<dbReference type="PeptideAtlas" id="Q80X72"/>
<dbReference type="ProteomicsDB" id="252504"/>
<dbReference type="Pumba" id="Q80X72"/>
<dbReference type="Antibodypedia" id="33889">
    <property type="antibodies" value="146 antibodies from 19 providers"/>
</dbReference>
<dbReference type="DNASU" id="74488"/>
<dbReference type="Ensembl" id="ENSMUST00000064606.8">
    <property type="protein sequence ID" value="ENSMUSP00000066777.8"/>
    <property type="gene ID" value="ENSMUSG00000052316.10"/>
</dbReference>
<dbReference type="GeneID" id="74488"/>
<dbReference type="KEGG" id="mmu:74488"/>
<dbReference type="UCSC" id="uc007ywn.2">
    <property type="organism name" value="mouse"/>
</dbReference>
<dbReference type="AGR" id="MGI:1921738"/>
<dbReference type="CTD" id="131578"/>
<dbReference type="MGI" id="MGI:1921738">
    <property type="gene designation" value="Lrrc15"/>
</dbReference>
<dbReference type="VEuPathDB" id="HostDB:ENSMUSG00000052316"/>
<dbReference type="eggNOG" id="KOG0619">
    <property type="taxonomic scope" value="Eukaryota"/>
</dbReference>
<dbReference type="GeneTree" id="ENSGT00940000161771"/>
<dbReference type="HOGENOM" id="CLU_000288_18_6_1"/>
<dbReference type="InParanoid" id="Q80X72"/>
<dbReference type="OMA" id="HNNSWRC"/>
<dbReference type="OrthoDB" id="2015831at2759"/>
<dbReference type="PhylomeDB" id="Q80X72"/>
<dbReference type="TreeFam" id="TF351124"/>
<dbReference type="BioGRID-ORCS" id="74488">
    <property type="hits" value="4 hits in 77 CRISPR screens"/>
</dbReference>
<dbReference type="PRO" id="PR:Q80X72"/>
<dbReference type="Proteomes" id="UP000000589">
    <property type="component" value="Chromosome 16"/>
</dbReference>
<dbReference type="RNAct" id="Q80X72">
    <property type="molecule type" value="protein"/>
</dbReference>
<dbReference type="Bgee" id="ENSMUSG00000052316">
    <property type="expression patterns" value="Expressed in lip and 49 other cell types or tissues"/>
</dbReference>
<dbReference type="GO" id="GO:0016324">
    <property type="term" value="C:apical plasma membrane"/>
    <property type="evidence" value="ECO:0007669"/>
    <property type="project" value="Ensembl"/>
</dbReference>
<dbReference type="GO" id="GO:0005886">
    <property type="term" value="C:plasma membrane"/>
    <property type="evidence" value="ECO:0000250"/>
    <property type="project" value="UniProtKB"/>
</dbReference>
<dbReference type="GO" id="GO:0005518">
    <property type="term" value="F:collagen binding"/>
    <property type="evidence" value="ECO:0007669"/>
    <property type="project" value="Ensembl"/>
</dbReference>
<dbReference type="GO" id="GO:0001968">
    <property type="term" value="F:fibronectin binding"/>
    <property type="evidence" value="ECO:0007669"/>
    <property type="project" value="Ensembl"/>
</dbReference>
<dbReference type="GO" id="GO:0043236">
    <property type="term" value="F:laminin binding"/>
    <property type="evidence" value="ECO:0007669"/>
    <property type="project" value="Ensembl"/>
</dbReference>
<dbReference type="GO" id="GO:0140311">
    <property type="term" value="F:protein sequestering activity"/>
    <property type="evidence" value="ECO:0007669"/>
    <property type="project" value="Ensembl"/>
</dbReference>
<dbReference type="GO" id="GO:0046597">
    <property type="term" value="P:host-mediated suppression of symbiont invasion"/>
    <property type="evidence" value="ECO:0007669"/>
    <property type="project" value="Ensembl"/>
</dbReference>
<dbReference type="GO" id="GO:1903077">
    <property type="term" value="P:negative regulation of protein localization to plasma membrane"/>
    <property type="evidence" value="ECO:0007669"/>
    <property type="project" value="Ensembl"/>
</dbReference>
<dbReference type="GO" id="GO:0030335">
    <property type="term" value="P:positive regulation of cell migration"/>
    <property type="evidence" value="ECO:0007669"/>
    <property type="project" value="Ensembl"/>
</dbReference>
<dbReference type="GO" id="GO:0046813">
    <property type="term" value="P:receptor-mediated virion attachment to host cell"/>
    <property type="evidence" value="ECO:0007669"/>
    <property type="project" value="Ensembl"/>
</dbReference>
<dbReference type="FunFam" id="3.80.10.10:FF:000517">
    <property type="entry name" value="Leucine rich repeat containing 15"/>
    <property type="match status" value="1"/>
</dbReference>
<dbReference type="FunFam" id="3.80.10.10:FF:001162">
    <property type="entry name" value="Leucine rich repeat containing 15"/>
    <property type="match status" value="1"/>
</dbReference>
<dbReference type="FunFam" id="3.80.10.10:FF:000783">
    <property type="entry name" value="Leucine-rich repeat-containing protein 15"/>
    <property type="match status" value="1"/>
</dbReference>
<dbReference type="Gene3D" id="3.80.10.10">
    <property type="entry name" value="Ribonuclease Inhibitor"/>
    <property type="match status" value="3"/>
</dbReference>
<dbReference type="InterPro" id="IPR000483">
    <property type="entry name" value="Cys-rich_flank_reg_C"/>
</dbReference>
<dbReference type="InterPro" id="IPR001611">
    <property type="entry name" value="Leu-rich_rpt"/>
</dbReference>
<dbReference type="InterPro" id="IPR003591">
    <property type="entry name" value="Leu-rich_rpt_typical-subtyp"/>
</dbReference>
<dbReference type="InterPro" id="IPR032675">
    <property type="entry name" value="LRR_dom_sf"/>
</dbReference>
<dbReference type="PANTHER" id="PTHR24366">
    <property type="entry name" value="IG(IMMUNOGLOBULIN) AND LRR(LEUCINE RICH REPEAT) DOMAINS"/>
    <property type="match status" value="1"/>
</dbReference>
<dbReference type="PANTHER" id="PTHR24366:SF96">
    <property type="entry name" value="LEUCINE RICH REPEAT CONTAINING 53"/>
    <property type="match status" value="1"/>
</dbReference>
<dbReference type="Pfam" id="PF13855">
    <property type="entry name" value="LRR_8"/>
    <property type="match status" value="5"/>
</dbReference>
<dbReference type="SMART" id="SM00365">
    <property type="entry name" value="LRR_SD22"/>
    <property type="match status" value="7"/>
</dbReference>
<dbReference type="SMART" id="SM00369">
    <property type="entry name" value="LRR_TYP"/>
    <property type="match status" value="14"/>
</dbReference>
<dbReference type="SMART" id="SM00082">
    <property type="entry name" value="LRRCT"/>
    <property type="match status" value="1"/>
</dbReference>
<dbReference type="SUPFAM" id="SSF52058">
    <property type="entry name" value="L domain-like"/>
    <property type="match status" value="2"/>
</dbReference>
<dbReference type="PROSITE" id="PS51450">
    <property type="entry name" value="LRR"/>
    <property type="match status" value="14"/>
</dbReference>
<sequence>MPLKHYLLLLVSCQAWAAGLAYYGCPSECTCSRASQVECTGAQIVAMPSPLPWNAMSLQILNTHITELPEDKFLNISALIALKMEKNELANIMPGAFRNLGSLRHLSLANNKLKNLPVRLFQDVNNLETLLLSNNQLVQIQPAQFSQFSNLKELQLYGNNLEYIPEGVFDHLVGLTKLNLGNNGFTHLSPRVFQHLGNLQVLRLYENRLSDIPMGTFDALGNLQELALQENQIGTLSPGLFHNNRNLQRLYLSNNHISHLPPGIFMQLPHLNKLTLFGNSLKELSPGVFGPMPNLRELWLYNNHITSLPDNAFSHLNQLQVLILSHNQLSYISPGAFNGLTNLRELSLHTNALQDLDGNVFRSLANLRNVSLQNNRLRQLPGSIFANVNGLMTIQLQNNNLENLPLGIFDHLGNLCELRLYDNPWRCDSNILPLHDWLILNRARLGTDTLPVCSSPASVRGQSLVIINVNFPGPSVQGPETPEVSSYPDTSSYPDSTSISSTTEITRSTDDDYTDLNTIEPIDDRNTWGMTDAQSGLAIAAIVIGIIALACSLAACICCCCCKKRSQAVLMQMKAPNEC</sequence>
<accession>Q80X72</accession>
<keyword id="KW-1003">Cell membrane</keyword>
<keyword id="KW-0325">Glycoprotein</keyword>
<keyword id="KW-0433">Leucine-rich repeat</keyword>
<keyword id="KW-0472">Membrane</keyword>
<keyword id="KW-1185">Reference proteome</keyword>
<keyword id="KW-0677">Repeat</keyword>
<keyword id="KW-0732">Signal</keyword>
<keyword id="KW-0812">Transmembrane</keyword>
<keyword id="KW-1133">Transmembrane helix</keyword>
<gene>
    <name type="primary">Lrrc15</name>
</gene>
<organism>
    <name type="scientific">Mus musculus</name>
    <name type="common">Mouse</name>
    <dbReference type="NCBI Taxonomy" id="10090"/>
    <lineage>
        <taxon>Eukaryota</taxon>
        <taxon>Metazoa</taxon>
        <taxon>Chordata</taxon>
        <taxon>Craniata</taxon>
        <taxon>Vertebrata</taxon>
        <taxon>Euteleostomi</taxon>
        <taxon>Mammalia</taxon>
        <taxon>Eutheria</taxon>
        <taxon>Euarchontoglires</taxon>
        <taxon>Glires</taxon>
        <taxon>Rodentia</taxon>
        <taxon>Myomorpha</taxon>
        <taxon>Muroidea</taxon>
        <taxon>Muridae</taxon>
        <taxon>Murinae</taxon>
        <taxon>Mus</taxon>
        <taxon>Mus</taxon>
    </lineage>
</organism>
<name>LRC15_MOUSE</name>